<name>TNR25_HUMAN</name>
<protein>
    <recommendedName>
        <fullName>Tumor necrosis factor receptor superfamily member 25</fullName>
    </recommendedName>
    <alternativeName>
        <fullName>Apo-3</fullName>
    </alternativeName>
    <alternativeName>
        <fullName>Apoptosis-inducing receptor AIR</fullName>
    </alternativeName>
    <alternativeName>
        <fullName>Apoptosis-mediating receptor DR3</fullName>
    </alternativeName>
    <alternativeName>
        <fullName>Apoptosis-mediating receptor TRAMP</fullName>
    </alternativeName>
    <alternativeName>
        <fullName>Death receptor 3</fullName>
    </alternativeName>
    <alternativeName>
        <fullName>Lymphocyte-associated receptor of death</fullName>
        <shortName>LARD</shortName>
    </alternativeName>
    <alternativeName>
        <fullName>Protein WSL</fullName>
    </alternativeName>
    <alternativeName>
        <fullName>Protein WSL-1</fullName>
    </alternativeName>
</protein>
<dbReference type="EMBL" id="Y09392">
    <property type="protein sequence ID" value="CAA70561.1"/>
    <property type="molecule type" value="mRNA"/>
</dbReference>
<dbReference type="EMBL" id="Y09392">
    <property type="protein sequence ID" value="CAA70559.1"/>
    <property type="molecule type" value="mRNA"/>
</dbReference>
<dbReference type="EMBL" id="Y09392">
    <property type="protein sequence ID" value="CAA70560.1"/>
    <property type="molecule type" value="mRNA"/>
</dbReference>
<dbReference type="EMBL" id="U72763">
    <property type="protein sequence ID" value="AAC50819.1"/>
    <property type="molecule type" value="mRNA"/>
</dbReference>
<dbReference type="EMBL" id="U83599">
    <property type="protein sequence ID" value="AAB41434.1"/>
    <property type="molecule type" value="Genomic_DNA"/>
</dbReference>
<dbReference type="EMBL" id="U83600">
    <property type="protein sequence ID" value="AAB41435.1"/>
    <property type="molecule type" value="Genomic_DNA"/>
</dbReference>
<dbReference type="EMBL" id="U78029">
    <property type="protein sequence ID" value="AAB40918.1"/>
    <property type="molecule type" value="mRNA"/>
</dbReference>
<dbReference type="EMBL" id="U74611">
    <property type="protein sequence ID" value="AAB39714.1"/>
    <property type="molecule type" value="mRNA"/>
</dbReference>
<dbReference type="EMBL" id="U94501">
    <property type="protein sequence ID" value="AAC51306.1"/>
    <property type="molecule type" value="mRNA"/>
</dbReference>
<dbReference type="EMBL" id="U94504">
    <property type="protein sequence ID" value="AAC51309.1"/>
    <property type="molecule type" value="mRNA"/>
</dbReference>
<dbReference type="EMBL" id="U94502">
    <property type="protein sequence ID" value="AAC51307.1"/>
    <property type="molecule type" value="mRNA"/>
</dbReference>
<dbReference type="EMBL" id="U94503">
    <property type="protein sequence ID" value="AAC51308.1"/>
    <property type="molecule type" value="mRNA"/>
</dbReference>
<dbReference type="EMBL" id="U94505">
    <property type="protein sequence ID" value="AAC51310.1"/>
    <property type="molecule type" value="mRNA"/>
</dbReference>
<dbReference type="EMBL" id="U94506">
    <property type="protein sequence ID" value="AAC51311.1"/>
    <property type="molecule type" value="mRNA"/>
</dbReference>
<dbReference type="EMBL" id="U94507">
    <property type="protein sequence ID" value="AAC51312.1"/>
    <property type="molecule type" value="mRNA"/>
</dbReference>
<dbReference type="EMBL" id="U94508">
    <property type="protein sequence ID" value="AAC51313.1"/>
    <property type="molecule type" value="mRNA"/>
</dbReference>
<dbReference type="EMBL" id="U94509">
    <property type="protein sequence ID" value="AAC51314.1"/>
    <property type="molecule type" value="mRNA"/>
</dbReference>
<dbReference type="EMBL" id="U94510">
    <property type="protein sequence ID" value="AAC51315.1"/>
    <property type="molecule type" value="mRNA"/>
</dbReference>
<dbReference type="EMBL" id="U94512">
    <property type="protein sequence ID" value="AAC51316.1"/>
    <property type="molecule type" value="mRNA"/>
</dbReference>
<dbReference type="EMBL" id="U83598">
    <property type="protein sequence ID" value="AAB41433.1"/>
    <property type="molecule type" value="mRNA"/>
</dbReference>
<dbReference type="EMBL" id="AF026070">
    <property type="protein sequence ID" value="AAC39556.1"/>
    <property type="molecule type" value="mRNA"/>
</dbReference>
<dbReference type="EMBL" id="AF026071">
    <property type="protein sequence ID" value="AAB82288.1"/>
    <property type="molecule type" value="mRNA"/>
</dbReference>
<dbReference type="EMBL" id="AB051850">
    <property type="protein sequence ID" value="BAB40662.1"/>
    <property type="molecule type" value="Genomic_DNA"/>
</dbReference>
<dbReference type="EMBL" id="AB051851">
    <property type="protein sequence ID" value="BAB40663.1"/>
    <property type="molecule type" value="Genomic_DNA"/>
</dbReference>
<dbReference type="EMBL" id="AY358309">
    <property type="protein sequence ID" value="AAQ88676.1"/>
    <property type="molecule type" value="mRNA"/>
</dbReference>
<dbReference type="EMBL" id="AY254324">
    <property type="protein sequence ID" value="AAO63495.1"/>
    <property type="molecule type" value="Genomic_DNA"/>
</dbReference>
<dbReference type="EMBL" id="U75380">
    <property type="protein sequence ID" value="AAC51192.1"/>
    <property type="molecule type" value="mRNA"/>
</dbReference>
<dbReference type="EMBL" id="AL158217">
    <property type="status" value="NOT_ANNOTATED_CDS"/>
    <property type="molecule type" value="Genomic_DNA"/>
</dbReference>
<dbReference type="EMBL" id="BC117189">
    <property type="protein sequence ID" value="AAI17190.1"/>
    <property type="molecule type" value="mRNA"/>
</dbReference>
<dbReference type="EMBL" id="BC143886">
    <property type="protein sequence ID" value="AAI43887.1"/>
    <property type="molecule type" value="mRNA"/>
</dbReference>
<dbReference type="EMBL" id="U75381">
    <property type="protein sequence ID" value="AAC51193.1"/>
    <property type="molecule type" value="mRNA"/>
</dbReference>
<dbReference type="EMBL" id="U83597">
    <property type="protein sequence ID" value="AAB41432.1"/>
    <property type="molecule type" value="mRNA"/>
</dbReference>
<dbReference type="CCDS" id="CCDS71.1">
    <molecule id="Q93038-1"/>
</dbReference>
<dbReference type="CCDS" id="CCDS72.1">
    <molecule id="Q93038-11"/>
</dbReference>
<dbReference type="CCDS" id="CCDS73.1">
    <molecule id="Q93038-10"/>
</dbReference>
<dbReference type="CCDS" id="CCDS74.1">
    <molecule id="Q93038-9"/>
</dbReference>
<dbReference type="CCDS" id="CCDS75.1">
    <molecule id="Q93038-8"/>
</dbReference>
<dbReference type="RefSeq" id="NP_001034753.1">
    <molecule id="Q93038-5"/>
    <property type="nucleotide sequence ID" value="NM_001039664.2"/>
</dbReference>
<dbReference type="RefSeq" id="NP_003781.1">
    <molecule id="Q93038-1"/>
    <property type="nucleotide sequence ID" value="NM_003790.3"/>
</dbReference>
<dbReference type="RefSeq" id="NP_683866.1">
    <molecule id="Q93038-11"/>
    <property type="nucleotide sequence ID" value="NM_148965.2"/>
</dbReference>
<dbReference type="RefSeq" id="NP_683867.1">
    <molecule id="Q93038-10"/>
    <property type="nucleotide sequence ID" value="NM_148966.2"/>
</dbReference>
<dbReference type="RefSeq" id="NP_683868.1">
    <molecule id="Q93038-9"/>
    <property type="nucleotide sequence ID" value="NM_148967.2"/>
</dbReference>
<dbReference type="RefSeq" id="NP_683871.1">
    <molecule id="Q93038-8"/>
    <property type="nucleotide sequence ID" value="NM_148970.2"/>
</dbReference>
<dbReference type="PDB" id="5YGP">
    <property type="method" value="X-ray"/>
    <property type="resolution" value="2.09 A"/>
    <property type="chains" value="A/B/C/D=328-415"/>
</dbReference>
<dbReference type="PDB" id="5YGS">
    <property type="method" value="X-ray"/>
    <property type="resolution" value="2.69 A"/>
    <property type="chains" value="A/B/C/D=328-415"/>
</dbReference>
<dbReference type="PDBsum" id="5YGP"/>
<dbReference type="PDBsum" id="5YGS"/>
<dbReference type="SMR" id="Q93038"/>
<dbReference type="BioGRID" id="114258">
    <property type="interactions" value="14"/>
</dbReference>
<dbReference type="DIP" id="DIP-59563N"/>
<dbReference type="FunCoup" id="Q93038">
    <property type="interactions" value="460"/>
</dbReference>
<dbReference type="IntAct" id="Q93038">
    <property type="interactions" value="2"/>
</dbReference>
<dbReference type="STRING" id="9606.ENSP00000367013"/>
<dbReference type="GlyCosmos" id="Q93038">
    <property type="glycosylation" value="5 sites, 1 glycan"/>
</dbReference>
<dbReference type="GlyGen" id="Q93038">
    <property type="glycosylation" value="7 sites, 1 O-linked glycan (5 sites)"/>
</dbReference>
<dbReference type="iPTMnet" id="Q93038"/>
<dbReference type="BioMuta" id="TNFRSF25"/>
<dbReference type="DMDM" id="2501233"/>
<dbReference type="MassIVE" id="Q93038"/>
<dbReference type="PaxDb" id="9606-ENSP00000367013"/>
<dbReference type="PeptideAtlas" id="Q93038"/>
<dbReference type="ProteomicsDB" id="75674">
    <molecule id="Q93038-1"/>
</dbReference>
<dbReference type="ProteomicsDB" id="75675">
    <molecule id="Q93038-10"/>
</dbReference>
<dbReference type="ProteomicsDB" id="75678">
    <molecule id="Q93038-2"/>
</dbReference>
<dbReference type="ProteomicsDB" id="75680">
    <molecule id="Q93038-4"/>
</dbReference>
<dbReference type="ProteomicsDB" id="75685">
    <molecule id="Q93038-9"/>
</dbReference>
<dbReference type="Antibodypedia" id="13011">
    <property type="antibodies" value="717 antibodies from 41 providers"/>
</dbReference>
<dbReference type="DNASU" id="8718"/>
<dbReference type="Ensembl" id="ENST00000348333.7">
    <molecule id="Q93038-9"/>
    <property type="protein sequence ID" value="ENSP00000314451.3"/>
    <property type="gene ID" value="ENSG00000215788.11"/>
</dbReference>
<dbReference type="Ensembl" id="ENST00000351748.7">
    <molecule id="Q93038-8"/>
    <property type="protein sequence ID" value="ENSP00000326762.3"/>
    <property type="gene ID" value="ENSG00000215788.11"/>
</dbReference>
<dbReference type="Ensembl" id="ENST00000351959.9">
    <molecule id="Q93038-10"/>
    <property type="protein sequence ID" value="ENSP00000337713.5"/>
    <property type="gene ID" value="ENSG00000215788.11"/>
</dbReference>
<dbReference type="Ensembl" id="ENST00000356876.8">
    <molecule id="Q93038-1"/>
    <property type="protein sequence ID" value="ENSP00000349341.3"/>
    <property type="gene ID" value="ENSG00000215788.11"/>
</dbReference>
<dbReference type="Ensembl" id="ENST00000377782.7">
    <molecule id="Q93038-11"/>
    <property type="protein sequence ID" value="ENSP00000367013.3"/>
    <property type="gene ID" value="ENSG00000215788.11"/>
</dbReference>
<dbReference type="Ensembl" id="ENST00000414040.6">
    <molecule id="Q93038-3"/>
    <property type="protein sequence ID" value="ENSP00000404274.2"/>
    <property type="gene ID" value="ENSG00000215788.11"/>
</dbReference>
<dbReference type="Ensembl" id="ENST00000485036.5">
    <molecule id="Q93038-12"/>
    <property type="protein sequence ID" value="ENSP00000431554.1"/>
    <property type="gene ID" value="ENSG00000215788.11"/>
</dbReference>
<dbReference type="Ensembl" id="ENST00000502588.5">
    <molecule id="Q93038-6"/>
    <property type="protein sequence ID" value="ENSP00000423121.1"/>
    <property type="gene ID" value="ENSG00000215788.11"/>
</dbReference>
<dbReference type="Ensembl" id="ENST00000502730.5">
    <molecule id="Q93038-7"/>
    <property type="protein sequence ID" value="ENSP00000421976.1"/>
    <property type="gene ID" value="ENSG00000215788.11"/>
</dbReference>
<dbReference type="Ensembl" id="ENST00000510563.5">
    <molecule id="Q93038-5"/>
    <property type="protein sequence ID" value="ENSP00000424071.1"/>
    <property type="gene ID" value="ENSG00000215788.11"/>
</dbReference>
<dbReference type="GeneID" id="8718"/>
<dbReference type="KEGG" id="hsa:8718"/>
<dbReference type="MANE-Select" id="ENST00000356876.8">
    <property type="protein sequence ID" value="ENSP00000349341.3"/>
    <property type="RefSeq nucleotide sequence ID" value="NM_003790.3"/>
    <property type="RefSeq protein sequence ID" value="NP_003781.1"/>
</dbReference>
<dbReference type="UCSC" id="uc001ana.4">
    <molecule id="Q93038-1"/>
    <property type="organism name" value="human"/>
</dbReference>
<dbReference type="AGR" id="HGNC:11910"/>
<dbReference type="CTD" id="8718"/>
<dbReference type="DisGeNET" id="8718"/>
<dbReference type="GeneCards" id="TNFRSF25"/>
<dbReference type="HGNC" id="HGNC:11910">
    <property type="gene designation" value="TNFRSF25"/>
</dbReference>
<dbReference type="HPA" id="ENSG00000215788">
    <property type="expression patterns" value="Tissue enhanced (brain, lymphoid tissue, pituitary gland)"/>
</dbReference>
<dbReference type="MIM" id="603366">
    <property type="type" value="gene"/>
</dbReference>
<dbReference type="neXtProt" id="NX_Q93038"/>
<dbReference type="OpenTargets" id="ENSG00000215788"/>
<dbReference type="PharmGKB" id="PA36603"/>
<dbReference type="VEuPathDB" id="HostDB:ENSG00000215788"/>
<dbReference type="eggNOG" id="ENOG502S19V">
    <property type="taxonomic scope" value="Eukaryota"/>
</dbReference>
<dbReference type="GeneTree" id="ENSGT00940000161888"/>
<dbReference type="HOGENOM" id="CLU_053353_0_0_1"/>
<dbReference type="InParanoid" id="Q93038"/>
<dbReference type="OMA" id="GVFWVQV"/>
<dbReference type="OrthoDB" id="9940478at2759"/>
<dbReference type="PAN-GO" id="Q93038">
    <property type="GO annotations" value="1 GO annotation based on evolutionary models"/>
</dbReference>
<dbReference type="PhylomeDB" id="Q93038"/>
<dbReference type="TreeFam" id="TF333916"/>
<dbReference type="PathwayCommons" id="Q93038"/>
<dbReference type="Reactome" id="R-HSA-5669034">
    <property type="pathway name" value="TNFs bind their physiological receptors"/>
</dbReference>
<dbReference type="SignaLink" id="Q93038"/>
<dbReference type="SIGNOR" id="Q93038"/>
<dbReference type="BioGRID-ORCS" id="8718">
    <property type="hits" value="12 hits in 1151 CRISPR screens"/>
</dbReference>
<dbReference type="ChiTaRS" id="TNFRSF25">
    <property type="organism name" value="human"/>
</dbReference>
<dbReference type="GeneWiki" id="TNFRSF25"/>
<dbReference type="GenomeRNAi" id="8718"/>
<dbReference type="Pharos" id="Q93038">
    <property type="development level" value="Tbio"/>
</dbReference>
<dbReference type="PRO" id="PR:Q93038"/>
<dbReference type="Proteomes" id="UP000005640">
    <property type="component" value="Chromosome 1"/>
</dbReference>
<dbReference type="RNAct" id="Q93038">
    <property type="molecule type" value="protein"/>
</dbReference>
<dbReference type="Bgee" id="ENSG00000215788">
    <property type="expression patterns" value="Expressed in right hemisphere of cerebellum and 130 other cell types or tissues"/>
</dbReference>
<dbReference type="ExpressionAtlas" id="Q93038">
    <property type="expression patterns" value="baseline and differential"/>
</dbReference>
<dbReference type="GO" id="GO:0005829">
    <property type="term" value="C:cytosol"/>
    <property type="evidence" value="ECO:0000303"/>
    <property type="project" value="UniProtKB"/>
</dbReference>
<dbReference type="GO" id="GO:0005576">
    <property type="term" value="C:extracellular region"/>
    <property type="evidence" value="ECO:0007669"/>
    <property type="project" value="UniProtKB-SubCell"/>
</dbReference>
<dbReference type="GO" id="GO:0005886">
    <property type="term" value="C:plasma membrane"/>
    <property type="evidence" value="ECO:0000314"/>
    <property type="project" value="MGI"/>
</dbReference>
<dbReference type="GO" id="GO:0038023">
    <property type="term" value="F:signaling receptor activity"/>
    <property type="evidence" value="ECO:0000303"/>
    <property type="project" value="UniProtKB"/>
</dbReference>
<dbReference type="GO" id="GO:0005031">
    <property type="term" value="F:tumor necrosis factor receptor activity"/>
    <property type="evidence" value="ECO:0000304"/>
    <property type="project" value="ProtInc"/>
</dbReference>
<dbReference type="GO" id="GO:0006915">
    <property type="term" value="P:apoptotic process"/>
    <property type="evidence" value="ECO:0000304"/>
    <property type="project" value="ProtInc"/>
</dbReference>
<dbReference type="GO" id="GO:0097190">
    <property type="term" value="P:apoptotic signaling pathway"/>
    <property type="evidence" value="ECO:0000304"/>
    <property type="project" value="ProtInc"/>
</dbReference>
<dbReference type="GO" id="GO:0007166">
    <property type="term" value="P:cell surface receptor signaling pathway"/>
    <property type="evidence" value="ECO:0000304"/>
    <property type="project" value="ProtInc"/>
</dbReference>
<dbReference type="GO" id="GO:0042981">
    <property type="term" value="P:regulation of apoptotic process"/>
    <property type="evidence" value="ECO:0000303"/>
    <property type="project" value="UniProtKB"/>
</dbReference>
<dbReference type="GO" id="GO:0007165">
    <property type="term" value="P:signal transduction"/>
    <property type="evidence" value="ECO:0000304"/>
    <property type="project" value="ProtInc"/>
</dbReference>
<dbReference type="CDD" id="cd08815">
    <property type="entry name" value="Death_TNFRSF25_DR3"/>
    <property type="match status" value="1"/>
</dbReference>
<dbReference type="CDD" id="cd13420">
    <property type="entry name" value="TNFRSF25"/>
    <property type="match status" value="1"/>
</dbReference>
<dbReference type="FunFam" id="2.10.50.10:FF:000034">
    <property type="entry name" value="TNF receptor superfamily member 25"/>
    <property type="match status" value="1"/>
</dbReference>
<dbReference type="FunFam" id="1.10.533.10:FF:000040">
    <property type="entry name" value="tumor necrosis factor receptor superfamily member 25"/>
    <property type="match status" value="1"/>
</dbReference>
<dbReference type="Gene3D" id="1.10.533.10">
    <property type="entry name" value="Death Domain, Fas"/>
    <property type="match status" value="1"/>
</dbReference>
<dbReference type="Gene3D" id="2.10.50.10">
    <property type="entry name" value="Tumor Necrosis Factor Receptor, subunit A, domain 2"/>
    <property type="match status" value="1"/>
</dbReference>
<dbReference type="InterPro" id="IPR011029">
    <property type="entry name" value="DEATH-like_dom_sf"/>
</dbReference>
<dbReference type="InterPro" id="IPR000488">
    <property type="entry name" value="Death_dom"/>
</dbReference>
<dbReference type="InterPro" id="IPR001368">
    <property type="entry name" value="TNFR/NGFR_Cys_rich_reg"/>
</dbReference>
<dbReference type="InterPro" id="IPR022329">
    <property type="entry name" value="TNFR_25"/>
</dbReference>
<dbReference type="InterPro" id="IPR034050">
    <property type="entry name" value="TNFRSF25_N"/>
</dbReference>
<dbReference type="PANTHER" id="PTHR47220">
    <property type="entry name" value="TUMOR NECROSIS FACTOR RECEPTOR SUPERFAMILY MEMBER 25"/>
    <property type="match status" value="1"/>
</dbReference>
<dbReference type="PANTHER" id="PTHR47220:SF1">
    <property type="entry name" value="TUMOR NECROSIS FACTOR RECEPTOR SUPERFAMILY MEMBER 25"/>
    <property type="match status" value="1"/>
</dbReference>
<dbReference type="Pfam" id="PF00531">
    <property type="entry name" value="Death"/>
    <property type="match status" value="1"/>
</dbReference>
<dbReference type="PRINTS" id="PR01972">
    <property type="entry name" value="TNFACTORR25"/>
</dbReference>
<dbReference type="SMART" id="SM00005">
    <property type="entry name" value="DEATH"/>
    <property type="match status" value="1"/>
</dbReference>
<dbReference type="SMART" id="SM00208">
    <property type="entry name" value="TNFR"/>
    <property type="match status" value="2"/>
</dbReference>
<dbReference type="SUPFAM" id="SSF47986">
    <property type="entry name" value="DEATH domain"/>
    <property type="match status" value="1"/>
</dbReference>
<dbReference type="SUPFAM" id="SSF57586">
    <property type="entry name" value="TNF receptor-like"/>
    <property type="match status" value="2"/>
</dbReference>
<dbReference type="PROSITE" id="PS50017">
    <property type="entry name" value="DEATH_DOMAIN"/>
    <property type="match status" value="1"/>
</dbReference>
<dbReference type="PROSITE" id="PS00652">
    <property type="entry name" value="TNFR_NGFR_1"/>
    <property type="match status" value="2"/>
</dbReference>
<dbReference type="PROSITE" id="PS50050">
    <property type="entry name" value="TNFR_NGFR_2"/>
    <property type="match status" value="1"/>
</dbReference>
<organism>
    <name type="scientific">Homo sapiens</name>
    <name type="common">Human</name>
    <dbReference type="NCBI Taxonomy" id="9606"/>
    <lineage>
        <taxon>Eukaryota</taxon>
        <taxon>Metazoa</taxon>
        <taxon>Chordata</taxon>
        <taxon>Craniata</taxon>
        <taxon>Vertebrata</taxon>
        <taxon>Euteleostomi</taxon>
        <taxon>Mammalia</taxon>
        <taxon>Eutheria</taxon>
        <taxon>Euarchontoglires</taxon>
        <taxon>Primates</taxon>
        <taxon>Haplorrhini</taxon>
        <taxon>Catarrhini</taxon>
        <taxon>Hominidae</taxon>
        <taxon>Homo</taxon>
    </lineage>
</organism>
<sequence length="417" mass="45385">MEQRPRGCAAVAAALLLVLLGARAQGGTRSPRCDCAGDFHKKIGLFCCRGCPAGHYLKAPCTEPCGNSTCLVCPQDTFLAWENHHNSECARCQACDEQASQVALENCSAVADTRCGCKPGWFVECQVSQCVSSSPFYCQPCLDCGALHRHTRLLCSRRDTDCGTCLPGFYEHGDGCVSCPTSTLGSCPERCAAVCGWRQMFWVQVLLAGLVVPLLLGATLTYTYRHCWPHKPLVTADEAGMEALTPPPATHLSPLDSAHTLLAPPDSSEKICTVQLVGNSWTPGYPETQEALCPQVTWSWDQLPSRALGPAAAPTLSPESPAGSPAMMLQPGPQLYDVMDAVPARRWKEFVRTLGLREAEIEAVEVEIGRFRDQQYEMLKRWRQQQPAGLGAVYAALERMGLDGCVEDLRSRLQRGP</sequence>
<accession>Q93038</accession>
<accession>B1ALX2</accession>
<accession>B1ALX3</accession>
<accession>B7ZLL7</accession>
<accession>O00275</accession>
<accession>O00276</accession>
<accession>O00277</accession>
<accession>O00278</accession>
<accession>O00279</accession>
<accession>O00280</accession>
<accession>O14865</accession>
<accession>O14866</accession>
<accession>P78507</accession>
<accession>P78515</accession>
<accession>Q17RU4</accession>
<accession>Q92983</accession>
<accession>Q93036</accession>
<accession>Q93037</accession>
<accession>Q99722</accession>
<accession>Q99830</accession>
<accession>Q99831</accession>
<accession>Q9BY86</accession>
<accession>Q9UME0</accession>
<accession>Q9UME1</accession>
<accession>Q9UME5</accession>
<comment type="function">
    <text evidence="4 6 7">Receptor for TNFSF12/APO3L/TWEAK. Interacts directly with the adapter TRADD. Mediates activation of NF-kappa-B and induces apoptosis. May play a role in regulating lymphocyte homeostasis.</text>
</comment>
<comment type="subunit">
    <text evidence="8">Homodimer. Interacts strongly via the death domains with TNFRSF1 and TRADD to activate at least two distinct signaling cascades, apoptosis and NF-kappa-B signaling. Interacts with BAG4.</text>
</comment>
<comment type="subcellular location">
    <molecule>Isoform 1</molecule>
    <subcellularLocation>
        <location>Cell membrane</location>
        <topology>Single-pass type I membrane protein</topology>
    </subcellularLocation>
</comment>
<comment type="subcellular location">
    <molecule>Isoform 2</molecule>
    <subcellularLocation>
        <location>Cell membrane</location>
        <topology>Single-pass type I membrane protein</topology>
    </subcellularLocation>
</comment>
<comment type="subcellular location">
    <molecule>Isoform 9</molecule>
    <subcellularLocation>
        <location>Cell membrane</location>
        <topology>Single-pass type I membrane protein</topology>
    </subcellularLocation>
</comment>
<comment type="subcellular location">
    <molecule>Isoform 11</molecule>
    <subcellularLocation>
        <location>Cell membrane</location>
        <topology>Single-pass type I membrane protein</topology>
    </subcellularLocation>
</comment>
<comment type="subcellular location">
    <molecule>Isoform 3</molecule>
    <subcellularLocation>
        <location>Secreted</location>
    </subcellularLocation>
</comment>
<comment type="subcellular location">
    <molecule>Isoform 4</molecule>
    <subcellularLocation>
        <location>Secreted</location>
    </subcellularLocation>
</comment>
<comment type="subcellular location">
    <molecule>Isoform 5</molecule>
    <subcellularLocation>
        <location>Secreted</location>
    </subcellularLocation>
</comment>
<comment type="subcellular location">
    <molecule>Isoform 6</molecule>
    <subcellularLocation>
        <location>Secreted</location>
    </subcellularLocation>
</comment>
<comment type="subcellular location">
    <molecule>Isoform 7</molecule>
    <subcellularLocation>
        <location>Secreted</location>
    </subcellularLocation>
</comment>
<comment type="subcellular location">
    <molecule>Isoform 8</molecule>
    <subcellularLocation>
        <location>Secreted</location>
    </subcellularLocation>
</comment>
<comment type="subcellular location">
    <molecule>Isoform 10</molecule>
    <subcellularLocation>
        <location>Secreted</location>
    </subcellularLocation>
</comment>
<comment type="subcellular location">
    <molecule>Isoform 12</molecule>
    <subcellularLocation>
        <location>Secreted</location>
    </subcellularLocation>
</comment>
<comment type="alternative products">
    <event type="alternative splicing"/>
    <isoform>
        <id>Q93038-1</id>
        <name>1</name>
        <name>WSL-1</name>
        <name>LARD-1A</name>
        <sequence type="displayed"/>
    </isoform>
    <isoform>
        <id>Q93038-2</id>
        <name>2</name>
        <name>LARD-1B</name>
        <sequence type="described" ref="VSP_006504"/>
    </isoform>
    <isoform>
        <id>Q93038-3</id>
        <name>3</name>
        <name>WSL-S1</name>
        <name>LARD-3</name>
        <sequence type="described" ref="VSP_006497 VSP_006498"/>
    </isoform>
    <isoform>
        <id>Q93038-4</id>
        <name>4</name>
        <name>WSL-S2</name>
        <name>LARD-2</name>
        <sequence type="described" ref="VSP_006501 VSP_006502"/>
    </isoform>
    <isoform>
        <id>Q93038-5</id>
        <name>5</name>
        <name>LARD-4</name>
        <name>LARD-11</name>
        <sequence type="described" ref="VSP_006495"/>
    </isoform>
    <isoform>
        <id>Q93038-6</id>
        <name>6</name>
        <name>LARD-5</name>
        <sequence type="described" ref="VSP_006491 VSP_006495"/>
    </isoform>
    <isoform>
        <id>Q93038-7</id>
        <name>7</name>
        <name>LARD-6</name>
        <sequence type="described" ref="VSP_006491 VSP_006493 VSP_006494"/>
    </isoform>
    <isoform>
        <id>Q93038-8</id>
        <name>8</name>
        <name>LARD-7</name>
        <sequence type="described" ref="VSP_006492"/>
    </isoform>
    <isoform>
        <id>Q93038-9</id>
        <name>9</name>
        <name>LARD-8</name>
        <sequence type="described" ref="VSP_006491"/>
    </isoform>
    <isoform>
        <id>Q93038-10</id>
        <name>10</name>
        <name>LARD-9</name>
        <sequence type="described" ref="VSP_006503"/>
    </isoform>
    <isoform>
        <id>Q93038-11</id>
        <name>11</name>
        <name>Beta</name>
        <sequence type="described" ref="VSP_006496"/>
    </isoform>
    <isoform>
        <id>Q93038-12</id>
        <name>12</name>
        <name>Beta soluble</name>
        <sequence type="described" ref="VSP_006499 VSP_006500"/>
    </isoform>
</comment>
<comment type="tissue specificity">
    <text>Abundantly expressed in thymocytes and lymphocytes. Detected in lymphocyte-rich tissues such as thymus, colon, intestine, and spleen. Also found in the prostate.</text>
</comment>
<comment type="PTM">
    <text evidence="16">(Microbial infection) Glycosylated at Arg-352 by enteropathogenic E.coli protein NleB1.</text>
</comment>
<comment type="PTM">
    <text evidence="15">Glycosylated.</text>
</comment>
<comment type="miscellaneous">
    <molecule>Isoform 3</molecule>
    <text evidence="15">May be produced at very low levels due to a premature stop codon in the mRNA, leading to nonsense-mediated mRNA decay.</text>
</comment>
<comment type="miscellaneous">
    <molecule>Isoform 4</molecule>
    <text evidence="15">May be produced at very low levels due to a premature stop codon in the mRNA, leading to nonsense-mediated mRNA decay.</text>
</comment>
<comment type="miscellaneous">
    <molecule>Isoform 5</molecule>
    <text evidence="15">May be produced at very low levels due to a premature stop codon in the mRNA, leading to nonsense-mediated mRNA decay.</text>
</comment>
<comment type="miscellaneous">
    <molecule>Isoform 6</molecule>
    <text evidence="15">May be produced at very low levels due to a premature stop codon in the mRNA, leading to nonsense-mediated mRNA decay.</text>
</comment>
<comment type="miscellaneous">
    <molecule>Isoform 7</molecule>
    <text evidence="15">May be produced at very low levels due to a premature stop codon in the mRNA, leading to nonsense-mediated mRNA decay.</text>
</comment>
<comment type="miscellaneous">
    <molecule>Isoform 12</molecule>
    <text evidence="15">May be produced at very low levels due to a premature stop codon in the mRNA, leading to nonsense-mediated mRNA decay.</text>
</comment>
<evidence type="ECO:0000255" key="1"/>
<evidence type="ECO:0000255" key="2">
    <source>
        <dbReference type="PROSITE-ProRule" id="PRU00064"/>
    </source>
</evidence>
<evidence type="ECO:0000255" key="3">
    <source>
        <dbReference type="PROSITE-ProRule" id="PRU00206"/>
    </source>
</evidence>
<evidence type="ECO:0000269" key="4">
    <source>
    </source>
</evidence>
<evidence type="ECO:0000269" key="5">
    <source>
    </source>
</evidence>
<evidence type="ECO:0000269" key="6">
    <source>
    </source>
</evidence>
<evidence type="ECO:0000269" key="7">
    <source>
    </source>
</evidence>
<evidence type="ECO:0000269" key="8">
    <source>
    </source>
</evidence>
<evidence type="ECO:0000269" key="9">
    <source ref="7"/>
</evidence>
<evidence type="ECO:0000269" key="10">
    <source ref="9"/>
</evidence>
<evidence type="ECO:0000303" key="11">
    <source>
    </source>
</evidence>
<evidence type="ECO:0000303" key="12">
    <source>
    </source>
</evidence>
<evidence type="ECO:0000303" key="13">
    <source>
    </source>
</evidence>
<evidence type="ECO:0000303" key="14">
    <source>
    </source>
</evidence>
<evidence type="ECO:0000305" key="15"/>
<evidence type="ECO:0000305" key="16">
    <source>
    </source>
</evidence>
<evidence type="ECO:0007829" key="17">
    <source>
        <dbReference type="PDB" id="5YGP"/>
    </source>
</evidence>
<feature type="signal peptide" evidence="1">
    <location>
        <begin position="1"/>
        <end position="24"/>
    </location>
</feature>
<feature type="chain" id="PRO_0000034606" description="Tumor necrosis factor receptor superfamily member 25">
    <location>
        <begin position="25"/>
        <end position="417"/>
    </location>
</feature>
<feature type="topological domain" description="Extracellular" evidence="1">
    <location>
        <begin position="25"/>
        <end position="199"/>
    </location>
</feature>
<feature type="transmembrane region" description="Helical" evidence="1">
    <location>
        <begin position="200"/>
        <end position="220"/>
    </location>
</feature>
<feature type="topological domain" description="Cytoplasmic" evidence="1">
    <location>
        <begin position="221"/>
        <end position="417"/>
    </location>
</feature>
<feature type="repeat" description="TNFR-Cys 1">
    <location>
        <begin position="34"/>
        <end position="71"/>
    </location>
</feature>
<feature type="repeat" description="TNFR-Cys 2">
    <location>
        <begin position="72"/>
        <end position="115"/>
    </location>
</feature>
<feature type="repeat" description="TNFR-Cys 3">
    <location>
        <begin position="116"/>
        <end position="163"/>
    </location>
</feature>
<feature type="repeat" description="TNFR-Cys 4">
    <location>
        <begin position="164"/>
        <end position="192"/>
    </location>
</feature>
<feature type="domain" description="Death" evidence="2">
    <location>
        <begin position="332"/>
        <end position="413"/>
    </location>
</feature>
<feature type="glycosylation site" description="N-linked (GlcNAc...) asparagine" evidence="1">
    <location>
        <position position="67"/>
    </location>
</feature>
<feature type="glycosylation site" description="N-linked (GlcNAc...) asparagine" evidence="1">
    <location>
        <position position="106"/>
    </location>
</feature>
<feature type="glycosylation site" description="(Microbial infection) N-beta-linked (GlcNAc) arginine" evidence="16">
    <location>
        <position position="352"/>
    </location>
</feature>
<feature type="disulfide bond" evidence="3">
    <location>
        <begin position="35"/>
        <end position="47"/>
    </location>
</feature>
<feature type="disulfide bond" evidence="3">
    <location>
        <begin position="48"/>
        <end position="61"/>
    </location>
</feature>
<feature type="disulfide bond" evidence="3">
    <location>
        <begin position="51"/>
        <end position="70"/>
    </location>
</feature>
<feature type="disulfide bond" evidence="3">
    <location>
        <begin position="73"/>
        <end position="89"/>
    </location>
</feature>
<feature type="disulfide bond" evidence="3">
    <location>
        <begin position="92"/>
        <end position="107"/>
    </location>
</feature>
<feature type="disulfide bond" evidence="3">
    <location>
        <begin position="95"/>
        <end position="115"/>
    </location>
</feature>
<feature type="disulfide bond" evidence="3">
    <location>
        <begin position="117"/>
        <end position="130"/>
    </location>
</feature>
<feature type="disulfide bond" evidence="3">
    <location>
        <begin position="138"/>
        <end position="155"/>
    </location>
</feature>
<feature type="disulfide bond" evidence="3">
    <location>
        <begin position="141"/>
        <end position="162"/>
    </location>
</feature>
<feature type="disulfide bond" evidence="3">
    <location>
        <begin position="165"/>
        <end position="176"/>
    </location>
</feature>
<feature type="disulfide bond" evidence="3">
    <location>
        <begin position="179"/>
        <end position="191"/>
    </location>
</feature>
<feature type="disulfide bond" evidence="3">
    <location>
        <begin position="187"/>
        <end position="195"/>
    </location>
</feature>
<feature type="splice variant" id="VSP_006492" description="In isoform 8." evidence="13">
    <location>
        <begin position="54"/>
        <end position="236"/>
    </location>
</feature>
<feature type="splice variant" id="VSP_006491" description="In isoform 6, isoform 7 and isoform 9." evidence="13">
    <location>
        <begin position="54"/>
        <end position="98"/>
    </location>
</feature>
<feature type="splice variant" id="VSP_006493" description="In isoform 7." evidence="13">
    <original>SRRDTDCGTCLPGFYE</original>
    <variation>HPSVTLGQRPHPSSTS</variation>
    <location>
        <begin position="156"/>
        <end position="171"/>
    </location>
</feature>
<feature type="splice variant" id="VSP_006494" description="In isoform 7." evidence="13">
    <location>
        <begin position="172"/>
        <end position="417"/>
    </location>
</feature>
<feature type="splice variant" id="VSP_006495" description="In isoform 5 and isoform 6." evidence="13">
    <location>
        <begin position="182"/>
        <end position="417"/>
    </location>
</feature>
<feature type="splice variant" id="VSP_006499" description="In isoform 12." evidence="14">
    <original>STLGSCPERCAAVCGWRQMFWVQVLLAGLVVPLLLGATLTYTYRHCWPHKPLVTADEAGMEALTPPPATHLSPLDSAHTLLAPPDSSEKICTVQLV</original>
    <variation>PPPSLAGAPWGAVQSAVPLSVAGGRVGGVLGMRVGELGWTEGRRVRRGATTQHPPAAFSVLGPGAPGWPCGPPPAWGHPDLHIPPLLASQAPGYCR</variation>
    <location>
        <begin position="182"/>
        <end position="277"/>
    </location>
</feature>
<feature type="splice variant" id="VSP_006497" description="In isoform 3." evidence="12 13">
    <original>STLGSCPERCAAVCGWRQMFWVQVLLAGLVVPLLLGA</original>
    <variation>VLGPGAPGWPCGPPPAWGHPDLHIPPLLASQAPGYCR</variation>
    <location>
        <begin position="182"/>
        <end position="218"/>
    </location>
</feature>
<feature type="splice variant" id="VSP_006496" description="In isoform 11." evidence="14">
    <original>STLGSCPERCAAVCGWRQM</original>
    <variation>PPPSLAGAPWGAVQSAVPLSVAGGRVGV</variation>
    <location>
        <begin position="182"/>
        <end position="200"/>
    </location>
</feature>
<feature type="splice variant" id="VSP_006501" description="In isoform 4." evidence="12 13">
    <original>MFWVQVLLAGLVVPLLLGATLTYTYRHCWPHKPLVTADEAGMEALTPPPATHLS</original>
    <variation>SRWCAGNARGRTGMDRGEAGEEGGNHPTPTSCFQCSGSRCSWLALWSPSCLGPP</variation>
    <location>
        <begin position="200"/>
        <end position="253"/>
    </location>
</feature>
<feature type="splice variant" id="VSP_006503" description="In isoform 10." evidence="11 13">
    <original>MFWVQVLLAGLVVPLLLGATLTYTYRHCWPHKPLVTAD</original>
    <variation>N</variation>
    <location>
        <begin position="200"/>
        <end position="237"/>
    </location>
</feature>
<feature type="splice variant" id="VSP_006498" description="In isoform 3." evidence="12 13">
    <location>
        <begin position="219"/>
        <end position="417"/>
    </location>
</feature>
<feature type="splice variant" id="VSP_006504" description="In isoform 2." evidence="13">
    <original>A</original>
    <variation>AA</variation>
    <location>
        <position position="236"/>
    </location>
</feature>
<feature type="splice variant" id="VSP_006502" description="In isoform 4." evidence="12 13">
    <location>
        <begin position="254"/>
        <end position="417"/>
    </location>
</feature>
<feature type="splice variant" id="VSP_006500" description="In isoform 12." evidence="14">
    <location>
        <begin position="278"/>
        <end position="417"/>
    </location>
</feature>
<feature type="sequence variant" id="VAR_018826" description="In dbSNP:rs35771371." evidence="10">
    <original>R</original>
    <variation>Q</variation>
    <location>
        <position position="23"/>
    </location>
</feature>
<feature type="sequence variant" id="VAR_018827" description="In dbSNP:rs11800462." evidence="9 10">
    <original>D</original>
    <variation>G</variation>
    <location>
        <position position="159"/>
    </location>
</feature>
<feature type="sequence variant" id="VAR_018828" description="In dbSNP:rs34529016." evidence="10">
    <original>P</original>
    <variation>R</variation>
    <location>
        <position position="254"/>
    </location>
</feature>
<feature type="sequence variant" id="VAR_011814" description="In dbSNP:rs1064590.">
    <original>R</original>
    <variation>L</variation>
    <location>
        <position position="370"/>
    </location>
</feature>
<feature type="sequence variant" id="VAR_011815" description="In dbSNP:rs1059333.">
    <original>R</original>
    <variation>H</variation>
    <location>
        <position position="381"/>
    </location>
</feature>
<feature type="mutagenesis site" description="Suppresses homodimerization, TNFR1 interaction, and apoptosis induction." evidence="5">
    <original>L</original>
    <variation>A</variation>
    <location>
        <position position="354"/>
    </location>
</feature>
<feature type="mutagenesis site" description="Suppresses homodimerization, and TNFR1 interaction." evidence="5">
    <original>L</original>
    <variation>A</variation>
    <location>
        <position position="356"/>
    </location>
</feature>
<feature type="mutagenesis site" description="Suppresses homodimerization, and TNFR1 interaction." evidence="5">
    <original>D</original>
    <variation>A</variation>
    <location>
        <position position="373"/>
    </location>
</feature>
<feature type="sequence conflict" description="In Ref. 12; AAC51192/AAC51193." evidence="15" ref="12">
    <original>RPR</original>
    <variation>AAA</variation>
    <location>
        <begin position="4"/>
        <end position="6"/>
    </location>
</feature>
<feature type="sequence conflict" description="In Ref. 13; AAB41435." evidence="15" ref="13">
    <original>P</original>
    <variation>H</variation>
    <location>
        <position position="60"/>
    </location>
</feature>
<feature type="sequence conflict" description="In Ref. 12 and 13." evidence="15" ref="12 13">
    <original>P</original>
    <variation>L</variation>
    <location>
        <position position="167"/>
    </location>
</feature>
<feature type="sequence conflict" description="In Ref. 1 and 6." evidence="15" ref="1 6">
    <original>A</original>
    <variation>R</variation>
    <location>
        <position position="312"/>
    </location>
</feature>
<feature type="helix" evidence="17">
    <location>
        <begin position="328"/>
        <end position="333"/>
    </location>
</feature>
<feature type="helix" evidence="17">
    <location>
        <begin position="334"/>
        <end position="338"/>
    </location>
</feature>
<feature type="turn" evidence="17">
    <location>
        <begin position="339"/>
        <end position="341"/>
    </location>
</feature>
<feature type="helix" evidence="17">
    <location>
        <begin position="347"/>
        <end position="354"/>
    </location>
</feature>
<feature type="helix" evidence="17">
    <location>
        <begin position="359"/>
        <end position="382"/>
    </location>
</feature>
<feature type="turn" evidence="17">
    <location>
        <begin position="383"/>
        <end position="385"/>
    </location>
</feature>
<feature type="helix" evidence="17">
    <location>
        <begin position="390"/>
        <end position="397"/>
    </location>
</feature>
<feature type="helix" evidence="17">
    <location>
        <begin position="401"/>
        <end position="414"/>
    </location>
</feature>
<keyword id="KW-0002">3D-structure</keyword>
<keyword id="KW-0025">Alternative splicing</keyword>
<keyword id="KW-0053">Apoptosis</keyword>
<keyword id="KW-1003">Cell membrane</keyword>
<keyword id="KW-1015">Disulfide bond</keyword>
<keyword id="KW-0325">Glycoprotein</keyword>
<keyword id="KW-0472">Membrane</keyword>
<keyword id="KW-1267">Proteomics identification</keyword>
<keyword id="KW-0675">Receptor</keyword>
<keyword id="KW-1185">Reference proteome</keyword>
<keyword id="KW-0677">Repeat</keyword>
<keyword id="KW-0964">Secreted</keyword>
<keyword id="KW-0732">Signal</keyword>
<keyword id="KW-0812">Transmembrane</keyword>
<keyword id="KW-1133">Transmembrane helix</keyword>
<gene>
    <name type="primary">TNFRSF25</name>
    <name type="synonym">APO3</name>
    <name type="synonym">DDR3</name>
    <name type="synonym">DR3</name>
    <name type="synonym">TNFRSF12</name>
    <name type="synonym">WSL</name>
    <name type="synonym">WSL1</name>
    <name type="ORF">UNQ455/PRO779</name>
</gene>
<reference key="1">
    <citation type="journal article" date="1996" name="Nature">
        <title>A death-domain-containing receptor that mediates apoptosis.</title>
        <authorList>
            <person name="Kitson J."/>
            <person name="Raven T."/>
            <person name="Jiang Y.-P."/>
            <person name="Goeddel D.V."/>
            <person name="Giles K.M."/>
            <person name="Pun K.-T."/>
            <person name="Grinham C.J."/>
            <person name="Brown R."/>
            <person name="Farrow S.N."/>
        </authorList>
    </citation>
    <scope>NUCLEOTIDE SEQUENCE [MRNA] (ISOFORMS 1; 3 AND 4)</scope>
    <scope>MUTAGENESIS</scope>
    <source>
        <tissue>Lymphoid tissue</tissue>
    </source>
</reference>
<reference key="2">
    <citation type="journal article" date="1996" name="Science">
        <title>Signal transduction by DR3, a death domain-containing receptor related to TNFR-1 and CD95.</title>
        <authorList>
            <person name="Chinnaiyan A.M."/>
            <person name="O'Rourke K."/>
            <person name="Yu G.-L."/>
            <person name="Lyons R.H."/>
            <person name="Garg M."/>
            <person name="Duan D.R."/>
            <person name="Xing L."/>
            <person name="Gentz R."/>
            <person name="Ni J."/>
            <person name="Dixit V.M."/>
        </authorList>
    </citation>
    <scope>NUCLEOTIDE SEQUENCE [MRNA] (ISOFORM 1)</scope>
    <scope>FUNCTION</scope>
    <source>
        <tissue>Umbilical vein endothelial cell</tissue>
    </source>
</reference>
<reference key="3">
    <citation type="submission" date="1997-01" db="EMBL/GenBank/DDBJ databases">
        <authorList>
            <person name="Degli-Esposti M.A."/>
            <person name="Din W.S."/>
            <person name="Cosman D."/>
            <person name="Smith C.A."/>
            <person name="Goodwin R.G."/>
        </authorList>
    </citation>
    <scope>NUCLEOTIDE SEQUENCE [MRNA]</scope>
</reference>
<reference key="4">
    <citation type="journal article" date="1996" name="Curr. Biol.">
        <title>Apo-3, a new member of the tumor necrosis factor receptor family, contains a death domain and activates apoptosis and NF-kappa-B.</title>
        <authorList>
            <person name="Marsters S.A."/>
            <person name="Sheridan J.P."/>
            <person name="Donahue C.J."/>
            <person name="Pitti R.M."/>
            <person name="Gray C.L."/>
            <person name="Goddard A.D."/>
            <person name="Bauer K.D."/>
            <person name="Ashkenazi A."/>
        </authorList>
    </citation>
    <scope>NUCLEOTIDE SEQUENCE [MRNA] (ISOFORM 1)</scope>
    <scope>FUNCTION</scope>
    <source>
        <tissue>Heart</tissue>
    </source>
</reference>
<reference key="5">
    <citation type="journal article" date="1997" name="Proc. Natl. Acad. Sci. U.S.A.">
        <title>LARD: a new lymphoid-specific death domain containing receptor regulated by alternative pre-mRNA splicing.</title>
        <authorList>
            <person name="Screaton G.R."/>
            <person name="Xu X.-N."/>
            <person name="Olsen A.L."/>
            <person name="Cowper A.E."/>
            <person name="Tan R."/>
            <person name="McMichael A.J."/>
            <person name="Bell J.I."/>
        </authorList>
    </citation>
    <scope>NUCLEOTIDE SEQUENCE [MRNA] (ISOFORMS 1; 2; 3; 4; 5; 6; 7; 8; 9 AND 10)</scope>
</reference>
<reference key="6">
    <citation type="journal article" date="1998" name="Biochem. Biophys. Res. Commun.">
        <title>A new death receptor 3 isoform: expression in human lymphoid cell lines and non-Hodgkin's lymphomas.</title>
        <authorList>
            <person name="Warzocha K."/>
            <person name="Ribeiro P."/>
            <person name="Charlot C."/>
            <person name="Renard N."/>
            <person name="Coiffier B."/>
            <person name="Salles G."/>
        </authorList>
    </citation>
    <scope>NUCLEOTIDE SEQUENCE [MRNA] (ISOFORMS 11 AND 12)</scope>
</reference>
<reference key="7">
    <citation type="submission" date="2000-11" db="EMBL/GenBank/DDBJ databases">
        <authorList>
            <person name="Shiozawa S."/>
            <person name="Konishi Y."/>
            <person name="Murayama K."/>
            <person name="Mukae N."/>
            <person name="Yamamoto E."/>
            <person name="Hayashi S."/>
            <person name="Sato M."/>
            <person name="Shiozawa K."/>
            <person name="Tsukamoto Y."/>
        </authorList>
    </citation>
    <scope>NUCLEOTIDE SEQUENCE [GENOMIC DNA] (ISOFORM 1)</scope>
    <scope>VARIANT GLY-159</scope>
</reference>
<reference key="8">
    <citation type="journal article" date="2003" name="Genome Res.">
        <title>The secreted protein discovery initiative (SPDI), a large-scale effort to identify novel human secreted and transmembrane proteins: a bioinformatics assessment.</title>
        <authorList>
            <person name="Clark H.F."/>
            <person name="Gurney A.L."/>
            <person name="Abaya E."/>
            <person name="Baker K."/>
            <person name="Baldwin D.T."/>
            <person name="Brush J."/>
            <person name="Chen J."/>
            <person name="Chow B."/>
            <person name="Chui C."/>
            <person name="Crowley C."/>
            <person name="Currell B."/>
            <person name="Deuel B."/>
            <person name="Dowd P."/>
            <person name="Eaton D."/>
            <person name="Foster J.S."/>
            <person name="Grimaldi C."/>
            <person name="Gu Q."/>
            <person name="Hass P.E."/>
            <person name="Heldens S."/>
            <person name="Huang A."/>
            <person name="Kim H.S."/>
            <person name="Klimowski L."/>
            <person name="Jin Y."/>
            <person name="Johnson S."/>
            <person name="Lee J."/>
            <person name="Lewis L."/>
            <person name="Liao D."/>
            <person name="Mark M.R."/>
            <person name="Robbie E."/>
            <person name="Sanchez C."/>
            <person name="Schoenfeld J."/>
            <person name="Seshagiri S."/>
            <person name="Simmons L."/>
            <person name="Singh J."/>
            <person name="Smith V."/>
            <person name="Stinson J."/>
            <person name="Vagts A."/>
            <person name="Vandlen R.L."/>
            <person name="Watanabe C."/>
            <person name="Wieand D."/>
            <person name="Woods K."/>
            <person name="Xie M.-H."/>
            <person name="Yansura D.G."/>
            <person name="Yi S."/>
            <person name="Yu G."/>
            <person name="Yuan J."/>
            <person name="Zhang M."/>
            <person name="Zhang Z."/>
            <person name="Goddard A.D."/>
            <person name="Wood W.I."/>
            <person name="Godowski P.J."/>
            <person name="Gray A.M."/>
        </authorList>
    </citation>
    <scope>NUCLEOTIDE SEQUENCE [LARGE SCALE MRNA] (ISOFORM 1)</scope>
</reference>
<reference key="9">
    <citation type="submission" date="2003-03" db="EMBL/GenBank/DDBJ databases">
        <authorList>
            <consortium name="NIEHS SNPs program"/>
        </authorList>
    </citation>
    <scope>NUCLEOTIDE SEQUENCE [GENOMIC DNA]</scope>
    <scope>VARIANTS GLN-23; GLY-159 AND ARG-254</scope>
</reference>
<reference key="10">
    <citation type="journal article" date="2006" name="Nature">
        <title>The DNA sequence and biological annotation of human chromosome 1.</title>
        <authorList>
            <person name="Gregory S.G."/>
            <person name="Barlow K.F."/>
            <person name="McLay K.E."/>
            <person name="Kaul R."/>
            <person name="Swarbreck D."/>
            <person name="Dunham A."/>
            <person name="Scott C.E."/>
            <person name="Howe K.L."/>
            <person name="Woodfine K."/>
            <person name="Spencer C.C.A."/>
            <person name="Jones M.C."/>
            <person name="Gillson C."/>
            <person name="Searle S."/>
            <person name="Zhou Y."/>
            <person name="Kokocinski F."/>
            <person name="McDonald L."/>
            <person name="Evans R."/>
            <person name="Phillips K."/>
            <person name="Atkinson A."/>
            <person name="Cooper R."/>
            <person name="Jones C."/>
            <person name="Hall R.E."/>
            <person name="Andrews T.D."/>
            <person name="Lloyd C."/>
            <person name="Ainscough R."/>
            <person name="Almeida J.P."/>
            <person name="Ambrose K.D."/>
            <person name="Anderson F."/>
            <person name="Andrew R.W."/>
            <person name="Ashwell R.I.S."/>
            <person name="Aubin K."/>
            <person name="Babbage A.K."/>
            <person name="Bagguley C.L."/>
            <person name="Bailey J."/>
            <person name="Beasley H."/>
            <person name="Bethel G."/>
            <person name="Bird C.P."/>
            <person name="Bray-Allen S."/>
            <person name="Brown J.Y."/>
            <person name="Brown A.J."/>
            <person name="Buckley D."/>
            <person name="Burton J."/>
            <person name="Bye J."/>
            <person name="Carder C."/>
            <person name="Chapman J.C."/>
            <person name="Clark S.Y."/>
            <person name="Clarke G."/>
            <person name="Clee C."/>
            <person name="Cobley V."/>
            <person name="Collier R.E."/>
            <person name="Corby N."/>
            <person name="Coville G.J."/>
            <person name="Davies J."/>
            <person name="Deadman R."/>
            <person name="Dunn M."/>
            <person name="Earthrowl M."/>
            <person name="Ellington A.G."/>
            <person name="Errington H."/>
            <person name="Frankish A."/>
            <person name="Frankland J."/>
            <person name="French L."/>
            <person name="Garner P."/>
            <person name="Garnett J."/>
            <person name="Gay L."/>
            <person name="Ghori M.R.J."/>
            <person name="Gibson R."/>
            <person name="Gilby L.M."/>
            <person name="Gillett W."/>
            <person name="Glithero R.J."/>
            <person name="Grafham D.V."/>
            <person name="Griffiths C."/>
            <person name="Griffiths-Jones S."/>
            <person name="Grocock R."/>
            <person name="Hammond S."/>
            <person name="Harrison E.S.I."/>
            <person name="Hart E."/>
            <person name="Haugen E."/>
            <person name="Heath P.D."/>
            <person name="Holmes S."/>
            <person name="Holt K."/>
            <person name="Howden P.J."/>
            <person name="Hunt A.R."/>
            <person name="Hunt S.E."/>
            <person name="Hunter G."/>
            <person name="Isherwood J."/>
            <person name="James R."/>
            <person name="Johnson C."/>
            <person name="Johnson D."/>
            <person name="Joy A."/>
            <person name="Kay M."/>
            <person name="Kershaw J.K."/>
            <person name="Kibukawa M."/>
            <person name="Kimberley A.M."/>
            <person name="King A."/>
            <person name="Knights A.J."/>
            <person name="Lad H."/>
            <person name="Laird G."/>
            <person name="Lawlor S."/>
            <person name="Leongamornlert D.A."/>
            <person name="Lloyd D.M."/>
            <person name="Loveland J."/>
            <person name="Lovell J."/>
            <person name="Lush M.J."/>
            <person name="Lyne R."/>
            <person name="Martin S."/>
            <person name="Mashreghi-Mohammadi M."/>
            <person name="Matthews L."/>
            <person name="Matthews N.S.W."/>
            <person name="McLaren S."/>
            <person name="Milne S."/>
            <person name="Mistry S."/>
            <person name="Moore M.J.F."/>
            <person name="Nickerson T."/>
            <person name="O'Dell C.N."/>
            <person name="Oliver K."/>
            <person name="Palmeiri A."/>
            <person name="Palmer S.A."/>
            <person name="Parker A."/>
            <person name="Patel D."/>
            <person name="Pearce A.V."/>
            <person name="Peck A.I."/>
            <person name="Pelan S."/>
            <person name="Phelps K."/>
            <person name="Phillimore B.J."/>
            <person name="Plumb R."/>
            <person name="Rajan J."/>
            <person name="Raymond C."/>
            <person name="Rouse G."/>
            <person name="Saenphimmachak C."/>
            <person name="Sehra H.K."/>
            <person name="Sheridan E."/>
            <person name="Shownkeen R."/>
            <person name="Sims S."/>
            <person name="Skuce C.D."/>
            <person name="Smith M."/>
            <person name="Steward C."/>
            <person name="Subramanian S."/>
            <person name="Sycamore N."/>
            <person name="Tracey A."/>
            <person name="Tromans A."/>
            <person name="Van Helmond Z."/>
            <person name="Wall M."/>
            <person name="Wallis J.M."/>
            <person name="White S."/>
            <person name="Whitehead S.L."/>
            <person name="Wilkinson J.E."/>
            <person name="Willey D.L."/>
            <person name="Williams H."/>
            <person name="Wilming L."/>
            <person name="Wray P.W."/>
            <person name="Wu Z."/>
            <person name="Coulson A."/>
            <person name="Vaudin M."/>
            <person name="Sulston J.E."/>
            <person name="Durbin R.M."/>
            <person name="Hubbard T."/>
            <person name="Wooster R."/>
            <person name="Dunham I."/>
            <person name="Carter N.P."/>
            <person name="McVean G."/>
            <person name="Ross M.T."/>
            <person name="Harrow J."/>
            <person name="Olson M.V."/>
            <person name="Beck S."/>
            <person name="Rogers J."/>
            <person name="Bentley D.R."/>
        </authorList>
    </citation>
    <scope>NUCLEOTIDE SEQUENCE [LARGE SCALE GENOMIC DNA]</scope>
</reference>
<reference key="11">
    <citation type="journal article" date="2004" name="Genome Res.">
        <title>The status, quality, and expansion of the NIH full-length cDNA project: the Mammalian Gene Collection (MGC).</title>
        <authorList>
            <consortium name="The MGC Project Team"/>
        </authorList>
    </citation>
    <scope>NUCLEOTIDE SEQUENCE [LARGE SCALE MRNA] (ISOFORM 10)</scope>
    <source>
        <tissue>Brain</tissue>
    </source>
</reference>
<reference key="12">
    <citation type="journal article" date="1997" name="Immunity">
        <title>TRAMP, a novel apoptosis-mediating receptor with sequence homology to tumor necrosis factor receptor 1 and Fas(Apo-1/CD95).</title>
        <authorList>
            <person name="Bodmer J.-L."/>
            <person name="Burns K."/>
            <person name="Schneider P."/>
            <person name="Hofmann K."/>
            <person name="Steiner V."/>
            <person name="Thome M."/>
            <person name="Bornand T."/>
            <person name="Hahne M."/>
            <person name="Schroeter M."/>
            <person name="Wilson A."/>
            <person name="French L.E."/>
            <person name="Browning J.L."/>
            <person name="Macdonald H.R."/>
            <person name="Tschopp J."/>
        </authorList>
    </citation>
    <scope>NUCLEOTIDE SEQUENCE [MRNA] OF 4-417</scope>
    <scope>FUNCTION</scope>
    <source>
        <tissue>Brain</tissue>
        <tissue>Fetal lung</tissue>
    </source>
</reference>
<reference key="13">
    <citation type="submission" date="1997-01" db="EMBL/GenBank/DDBJ databases">
        <authorList>
            <person name="Chaudhary P.M."/>
            <person name="Hood L.E."/>
        </authorList>
    </citation>
    <scope>NUCLEOTIDE SEQUENCE [GENOMIC DNA / MRNA] OF 7-417</scope>
    <source>
        <tissue>Brain</tissue>
    </source>
</reference>
<reference key="14">
    <citation type="journal article" date="1999" name="Science">
        <title>Prevention of constitutive TNF receptor 1 signaling by silencer of death domains.</title>
        <authorList>
            <person name="Jiang Y."/>
            <person name="Woronicz J.D."/>
            <person name="Liu W."/>
            <person name="Goeddel D.V."/>
        </authorList>
    </citation>
    <scope>INTERACTION WITH BAG4</scope>
</reference>
<reference key="15">
    <citation type="journal article" date="2004" name="Genome Biol.">
        <title>An unappreciated role for RNA surveillance.</title>
        <authorList>
            <person name="Hillman R.T."/>
            <person name="Green R.E."/>
            <person name="Brenner S.E."/>
        </authorList>
    </citation>
    <scope>SPLICE ISOFORM(S) THAT ARE POTENTIAL NMD TARGET(S)</scope>
</reference>
<reference key="16">
    <citation type="journal article" date="2019" name="Mol. Cell">
        <title>Structural and functional insights into host death domains inactivation by the bacterial arginine GlcNAcyltransferase effector.</title>
        <authorList>
            <person name="Ding J."/>
            <person name="Pan X."/>
            <person name="Du L."/>
            <person name="Yao Q."/>
            <person name="Xue J."/>
            <person name="Yao H."/>
            <person name="Wang D.C."/>
            <person name="Li S."/>
            <person name="Shao F."/>
        </authorList>
    </citation>
    <scope>GLYCOSYLATION AT ARG-352 (MICROBIAL INFECTION)</scope>
    <scope>MUTAGENESIS OF ARG-250</scope>
</reference>
<proteinExistence type="evidence at protein level"/>